<reference evidence="5" key="1">
    <citation type="submission" date="2010-11" db="EMBL/GenBank/DDBJ databases">
        <title>The rice blast resistance gene Piks forms a allelic series with Pik-m, Pik and Pik-p.</title>
        <authorList>
            <person name="Pan Q."/>
            <person name="Zhai C."/>
            <person name="Dong Z."/>
            <person name="Lin F."/>
            <person name="Wang L."/>
        </authorList>
    </citation>
    <scope>NUCLEOTIDE SEQUENCE [LARGE SCALE GENOMIC DNA]</scope>
</reference>
<organism>
    <name type="scientific">Oryza sativa subsp. japonica</name>
    <name type="common">Rice</name>
    <dbReference type="NCBI Taxonomy" id="39947"/>
    <lineage>
        <taxon>Eukaryota</taxon>
        <taxon>Viridiplantae</taxon>
        <taxon>Streptophyta</taxon>
        <taxon>Embryophyta</taxon>
        <taxon>Tracheophyta</taxon>
        <taxon>Spermatophyta</taxon>
        <taxon>Magnoliopsida</taxon>
        <taxon>Liliopsida</taxon>
        <taxon>Poales</taxon>
        <taxon>Poaceae</taxon>
        <taxon>BOP clade</taxon>
        <taxon>Oryzoideae</taxon>
        <taxon>Oryzeae</taxon>
        <taxon>Oryzinae</taxon>
        <taxon>Oryza</taxon>
        <taxon>Oryza sativa</taxon>
    </lineage>
</organism>
<gene>
    <name evidence="5" type="primary">PIKS-1</name>
</gene>
<comment type="function">
    <text evidence="1">Disease resistance (R) protein that specifically recognizes the AVR-Pik effector avirulence protein from M.oryzae. Resistance proteins guard the plant against pathogens that contain an appropriate avirulence protein via an indirect interaction with this avirulence protein. That triggers a defense system including the hypersensitive response, which restricts the pathogen growth.</text>
</comment>
<comment type="subunit">
    <text evidence="1">Interacts with AVR-Pik through its N-terminal part containing the HMA-like domain.</text>
</comment>
<comment type="domain">
    <text evidence="1">The HMA-like (RATX1) domain is responsible for the specific recognition of AVR effectors.</text>
</comment>
<comment type="similarity">
    <text evidence="4">Belongs to the disease resistance NB-LRR family.</text>
</comment>
<feature type="chain" id="PRO_0000444669" description="Disease resistance protein Piks-1">
    <location>
        <begin position="1"/>
        <end position="1143"/>
    </location>
</feature>
<feature type="domain" description="HMA" evidence="3">
    <location>
        <begin position="189"/>
        <end position="258"/>
    </location>
</feature>
<feature type="domain" description="NB-ARC" evidence="2">
    <location>
        <begin position="282"/>
        <end position="570"/>
    </location>
</feature>
<feature type="repeat" description="LRR 1" evidence="2">
    <location>
        <begin position="681"/>
        <end position="706"/>
    </location>
</feature>
<feature type="repeat" description="LRR 2" evidence="2">
    <location>
        <begin position="708"/>
        <end position="731"/>
    </location>
</feature>
<feature type="repeat" description="LRR 3" evidence="2">
    <location>
        <begin position="732"/>
        <end position="754"/>
    </location>
</feature>
<feature type="repeat" description="LRR 4" evidence="2">
    <location>
        <begin position="756"/>
        <end position="777"/>
    </location>
</feature>
<feature type="repeat" description="LRR 5" evidence="2">
    <location>
        <begin position="778"/>
        <end position="800"/>
    </location>
</feature>
<feature type="repeat" description="LRR 6" evidence="2">
    <location>
        <begin position="802"/>
        <end position="823"/>
    </location>
</feature>
<feature type="repeat" description="LRR 7" evidence="2">
    <location>
        <begin position="824"/>
        <end position="848"/>
    </location>
</feature>
<feature type="repeat" description="LRR 8" evidence="2">
    <location>
        <begin position="945"/>
        <end position="968"/>
    </location>
</feature>
<feature type="repeat" description="LRR 9" evidence="2">
    <location>
        <begin position="979"/>
        <end position="1002"/>
    </location>
</feature>
<feature type="repeat" description="LRR 10" evidence="2">
    <location>
        <begin position="1004"/>
        <end position="1027"/>
    </location>
</feature>
<feature type="region of interest" description="Structured coiled coil (CC) domain" evidence="1">
    <location>
        <begin position="1"/>
        <end position="190"/>
    </location>
</feature>
<feature type="region of interest" description="HMA-like domain" evidence="1">
    <location>
        <begin position="191"/>
        <end position="264"/>
    </location>
</feature>
<keyword id="KW-0067">ATP-binding</keyword>
<keyword id="KW-0175">Coiled coil</keyword>
<keyword id="KW-0433">Leucine-rich repeat</keyword>
<keyword id="KW-0547">Nucleotide-binding</keyword>
<keyword id="KW-0611">Plant defense</keyword>
<keyword id="KW-0677">Repeat</keyword>
<dbReference type="EMBL" id="HQ662329">
    <property type="protein sequence ID" value="AET36547.1"/>
    <property type="molecule type" value="Genomic_DNA"/>
</dbReference>
<dbReference type="SMR" id="P0DO09"/>
<dbReference type="GO" id="GO:0043531">
    <property type="term" value="F:ADP binding"/>
    <property type="evidence" value="ECO:0007669"/>
    <property type="project" value="InterPro"/>
</dbReference>
<dbReference type="GO" id="GO:0005524">
    <property type="term" value="F:ATP binding"/>
    <property type="evidence" value="ECO:0007669"/>
    <property type="project" value="UniProtKB-KW"/>
</dbReference>
<dbReference type="GO" id="GO:0046872">
    <property type="term" value="F:metal ion binding"/>
    <property type="evidence" value="ECO:0007669"/>
    <property type="project" value="InterPro"/>
</dbReference>
<dbReference type="GO" id="GO:0006952">
    <property type="term" value="P:defense response"/>
    <property type="evidence" value="ECO:0007669"/>
    <property type="project" value="UniProtKB-KW"/>
</dbReference>
<dbReference type="GO" id="GO:0051707">
    <property type="term" value="P:response to other organism"/>
    <property type="evidence" value="ECO:0007669"/>
    <property type="project" value="UniProtKB-ARBA"/>
</dbReference>
<dbReference type="FunFam" id="3.40.50.300:FF:003687">
    <property type="entry name" value="Disease resistance protein Pik-1"/>
    <property type="match status" value="1"/>
</dbReference>
<dbReference type="Gene3D" id="1.20.5.4130">
    <property type="match status" value="1"/>
</dbReference>
<dbReference type="Gene3D" id="3.30.70.100">
    <property type="match status" value="1"/>
</dbReference>
<dbReference type="Gene3D" id="3.40.50.300">
    <property type="entry name" value="P-loop containing nucleotide triphosphate hydrolases"/>
    <property type="match status" value="1"/>
</dbReference>
<dbReference type="Gene3D" id="3.80.10.10">
    <property type="entry name" value="Ribonuclease Inhibitor"/>
    <property type="match status" value="1"/>
</dbReference>
<dbReference type="Gene3D" id="1.10.10.10">
    <property type="entry name" value="Winged helix-like DNA-binding domain superfamily/Winged helix DNA-binding domain"/>
    <property type="match status" value="1"/>
</dbReference>
<dbReference type="InterPro" id="IPR044974">
    <property type="entry name" value="Disease_R_plants"/>
</dbReference>
<dbReference type="InterPro" id="IPR006121">
    <property type="entry name" value="HMA_dom"/>
</dbReference>
<dbReference type="InterPro" id="IPR003591">
    <property type="entry name" value="Leu-rich_rpt_typical-subtyp"/>
</dbReference>
<dbReference type="InterPro" id="IPR032675">
    <property type="entry name" value="LRR_dom_sf"/>
</dbReference>
<dbReference type="InterPro" id="IPR055414">
    <property type="entry name" value="LRR_R13L4/SHOC2-like"/>
</dbReference>
<dbReference type="InterPro" id="IPR002182">
    <property type="entry name" value="NB-ARC"/>
</dbReference>
<dbReference type="InterPro" id="IPR027417">
    <property type="entry name" value="P-loop_NTPase"/>
</dbReference>
<dbReference type="InterPro" id="IPR041118">
    <property type="entry name" value="Rx_N"/>
</dbReference>
<dbReference type="InterPro" id="IPR036388">
    <property type="entry name" value="WH-like_DNA-bd_sf"/>
</dbReference>
<dbReference type="PANTHER" id="PTHR23155">
    <property type="entry name" value="DISEASE RESISTANCE PROTEIN RP"/>
    <property type="match status" value="1"/>
</dbReference>
<dbReference type="PANTHER" id="PTHR23155:SF1167">
    <property type="entry name" value="OS08G0412100 PROTEIN"/>
    <property type="match status" value="1"/>
</dbReference>
<dbReference type="Pfam" id="PF23598">
    <property type="entry name" value="LRR_14"/>
    <property type="match status" value="3"/>
</dbReference>
<dbReference type="Pfam" id="PF00931">
    <property type="entry name" value="NB-ARC"/>
    <property type="match status" value="1"/>
</dbReference>
<dbReference type="Pfam" id="PF18052">
    <property type="entry name" value="Rx_N"/>
    <property type="match status" value="1"/>
</dbReference>
<dbReference type="Pfam" id="PF23559">
    <property type="entry name" value="WH_DRP"/>
    <property type="match status" value="1"/>
</dbReference>
<dbReference type="PRINTS" id="PR00364">
    <property type="entry name" value="DISEASERSIST"/>
</dbReference>
<dbReference type="SMART" id="SM00369">
    <property type="entry name" value="LRR_TYP"/>
    <property type="match status" value="3"/>
</dbReference>
<dbReference type="SUPFAM" id="SSF52540">
    <property type="entry name" value="P-loop containing nucleoside triphosphate hydrolases"/>
    <property type="match status" value="1"/>
</dbReference>
<dbReference type="SUPFAM" id="SSF52047">
    <property type="entry name" value="RNI-like"/>
    <property type="match status" value="1"/>
</dbReference>
<dbReference type="PROSITE" id="PS50846">
    <property type="entry name" value="HMA_2"/>
    <property type="match status" value="1"/>
</dbReference>
<accession>P0DO09</accession>
<accession>D5L9G0</accession>
<evidence type="ECO:0000250" key="1">
    <source>
        <dbReference type="UniProtKB" id="F2VYU4"/>
    </source>
</evidence>
<evidence type="ECO:0000255" key="2"/>
<evidence type="ECO:0000255" key="3">
    <source>
        <dbReference type="PROSITE-ProRule" id="PRU00280"/>
    </source>
</evidence>
<evidence type="ECO:0000305" key="4"/>
<evidence type="ECO:0000312" key="5">
    <source>
        <dbReference type="EMBL" id="AET36547.1"/>
    </source>
</evidence>
<protein>
    <recommendedName>
        <fullName evidence="4">Disease resistance protein Piks-1</fullName>
    </recommendedName>
    <alternativeName>
        <fullName evidence="5">NBS-LRR class disease resistance protein Piks-1</fullName>
    </alternativeName>
</protein>
<sequence>MEAAAMAVTAATGALAPVLVKLAALLDDGECNLLEGSRSDAEFIRSELEAVHSLLTPNILGRMGDDDAACKDGLIAEVRELSYDLDDAVDDFLELNFEQRRSASPFGELKARVEERVSNRFSDWKLPAASLPPSSVHRRAGLPPPDAGLVGMHKRKEELIELLEQGSSDASRWRKRKPHVPLRIMGGEMQKIVFKIPMVDDKSRTKAMSLVASTVGVHSVAIAGDLRDEVVVVGDGIDSINLVSALRKKVGPAMFLEVSQAKEDVKEITAMLAPVKSICEFHEVKTICILGLPGGGKTTIARVLYHALGTQFQCRVFASISPSSSPSPNLTETLADIFAQAQLGVTDTLSTPYGGSGTGRALQQHLIDNISAFLLNKKYLIVIDDIWHWEEWEVIRKSIPKNDLGGRIIMTTRLNSIAEKCHTDDNDVFVYEVGDLDNNDAWSLSWGIATKSGAGNRIGTGEDNSCYDIVNMCYGMPLALIWLSSALVGEIEELGGAEVKKCRDLRHIEDGILDIPSLQPLAESLCLGYNHLPLYLRTLLLYCSAYHWSNRIERGRLVRRWIAEGFVSEEKEAEGYFGELINRGWITQHGDNNSYNYYEIHPVMLAFLRCKSKEYNFLTCLGLGSDTSTSASSPRLIRRLSLQGGYPVDCLSSMSMDVSHTCSLVVLGDVARPKGIPFYMFKRLRVLDLEDNKDIQDSHLQGICEQLSLRVRYLGLKGTRIRKLPQEMRKLKHLEILYVGSTRISELPQEIGELKHLRILDVRNTDITELPLQIRELQHLHTLDVRNTPISELPPQVGKLQNLKIMCVRSTGVRELPKEIGELNHLQTLDVRNTRVRELPWQAGQISQSLRVLAGDSGDGVRLPEGVCEALINGIPGATRAKCREVLSIAIIDRFGPPLVGIFKVPGSHMRIPKMIKDHFRVLSCLDIRLCHKLEDDDQKFLAEMPNLQTLVLRFEALPRQPITINGTGFQMLESFRVDSRVPRIAFHEDAMPNLKLLEFKFYAGPASNDAIGITNLKSLQKVVFRCSPWYKSDAPGISATIDVVKKEAEEHPNRPITLLINAGYKEISTESHGSSENIAGSSGIDTEPAQAQHDNLPAVRDDYKGKGILLDGRCPTCGRATKIEEETQDRVADIEIQTETTS</sequence>
<proteinExistence type="inferred from homology"/>
<name>PIKS1_ORYSJ</name>